<evidence type="ECO:0000250" key="1">
    <source>
        <dbReference type="UniProtKB" id="P00415"/>
    </source>
</evidence>
<evidence type="ECO:0000250" key="2">
    <source>
        <dbReference type="UniProtKB" id="P00420"/>
    </source>
</evidence>
<evidence type="ECO:0000305" key="3"/>
<evidence type="ECO:0000312" key="4">
    <source>
        <dbReference type="Proteomes" id="UP000011712"/>
    </source>
</evidence>
<feature type="chain" id="PRO_0000183773" description="Cytochrome c oxidase subunit 3">
    <location>
        <begin position="1"/>
        <end position="261"/>
    </location>
</feature>
<feature type="topological domain" description="Mitochondrial matrix" evidence="1">
    <location>
        <begin position="1"/>
        <end position="15"/>
    </location>
</feature>
<feature type="transmembrane region" description="Helical; Name=I" evidence="1">
    <location>
        <begin position="16"/>
        <end position="34"/>
    </location>
</feature>
<feature type="topological domain" description="Mitochondrial intermembrane" evidence="1">
    <location>
        <begin position="35"/>
        <end position="40"/>
    </location>
</feature>
<feature type="transmembrane region" description="Helical; Name=II" evidence="1">
    <location>
        <begin position="41"/>
        <end position="66"/>
    </location>
</feature>
<feature type="topological domain" description="Mitochondrial matrix" evidence="1">
    <location>
        <begin position="67"/>
        <end position="72"/>
    </location>
</feature>
<feature type="transmembrane region" description="Helical; Name=III" evidence="1">
    <location>
        <begin position="73"/>
        <end position="105"/>
    </location>
</feature>
<feature type="topological domain" description="Mitochondrial intermembrane" evidence="1">
    <location>
        <begin position="106"/>
        <end position="128"/>
    </location>
</feature>
<feature type="transmembrane region" description="Helical; Name=IV" evidence="1">
    <location>
        <begin position="129"/>
        <end position="152"/>
    </location>
</feature>
<feature type="topological domain" description="Mitochondrial matrix" evidence="1">
    <location>
        <begin position="153"/>
        <end position="155"/>
    </location>
</feature>
<feature type="transmembrane region" description="Helical; Name=V" evidence="1">
    <location>
        <begin position="156"/>
        <end position="183"/>
    </location>
</feature>
<feature type="topological domain" description="Mitochondrial intermembrane" evidence="1">
    <location>
        <begin position="184"/>
        <end position="190"/>
    </location>
</feature>
<feature type="transmembrane region" description="Helical; Name=VI" evidence="1">
    <location>
        <begin position="191"/>
        <end position="223"/>
    </location>
</feature>
<feature type="topological domain" description="Mitochondrial matrix" evidence="1">
    <location>
        <begin position="224"/>
        <end position="232"/>
    </location>
</feature>
<feature type="transmembrane region" description="Helical; Name=VII" evidence="1">
    <location>
        <begin position="233"/>
        <end position="256"/>
    </location>
</feature>
<feature type="topological domain" description="Mitochondrial intermembrane" evidence="1">
    <location>
        <begin position="257"/>
        <end position="261"/>
    </location>
</feature>
<dbReference type="EC" id="7.1.1.9"/>
<dbReference type="EMBL" id="U20753">
    <property type="protein sequence ID" value="AAC48575.1"/>
    <property type="molecule type" value="Genomic_DNA"/>
</dbReference>
<dbReference type="PIR" id="T11408">
    <property type="entry name" value="T11408"/>
</dbReference>
<dbReference type="RefSeq" id="NP_008257.1">
    <property type="nucleotide sequence ID" value="NC_001700.1"/>
</dbReference>
<dbReference type="SMR" id="P48892"/>
<dbReference type="FunCoup" id="P48892">
    <property type="interactions" value="11"/>
</dbReference>
<dbReference type="STRING" id="9685.ENSFCAP00000025715"/>
<dbReference type="PaxDb" id="9685-ENSFCAP00000025715"/>
<dbReference type="Ensembl" id="ENSFCAT00000032650.1">
    <property type="protein sequence ID" value="ENSFCAP00000025715.1"/>
    <property type="gene ID" value="ENSFCAG00000032065.1"/>
</dbReference>
<dbReference type="GeneID" id="807933"/>
<dbReference type="KEGG" id="fca:807933"/>
<dbReference type="CTD" id="4514"/>
<dbReference type="VGNC" id="VGNC:80932">
    <property type="gene designation" value="MT-CO3"/>
</dbReference>
<dbReference type="eggNOG" id="KOG4664">
    <property type="taxonomic scope" value="Eukaryota"/>
</dbReference>
<dbReference type="GeneTree" id="ENSGT00390000013064"/>
<dbReference type="HOGENOM" id="CLU_044071_0_0_1"/>
<dbReference type="InParanoid" id="P48892"/>
<dbReference type="OMA" id="SIYWWGS"/>
<dbReference type="OrthoDB" id="10050457at2759"/>
<dbReference type="Proteomes" id="UP000011712">
    <property type="component" value="Mitochondrion"/>
</dbReference>
<dbReference type="Bgee" id="ENSFCAG00000032065">
    <property type="expression patterns" value="Expressed in adult mammalian kidney and 10 other cell types or tissues"/>
</dbReference>
<dbReference type="GO" id="GO:0005743">
    <property type="term" value="C:mitochondrial inner membrane"/>
    <property type="evidence" value="ECO:0007669"/>
    <property type="project" value="UniProtKB-SubCell"/>
</dbReference>
<dbReference type="GO" id="GO:0005739">
    <property type="term" value="C:mitochondrion"/>
    <property type="evidence" value="ECO:0000318"/>
    <property type="project" value="GO_Central"/>
</dbReference>
<dbReference type="GO" id="GO:0045277">
    <property type="term" value="C:respiratory chain complex IV"/>
    <property type="evidence" value="ECO:0000250"/>
    <property type="project" value="UniProtKB"/>
</dbReference>
<dbReference type="GO" id="GO:0004129">
    <property type="term" value="F:cytochrome-c oxidase activity"/>
    <property type="evidence" value="ECO:0007669"/>
    <property type="project" value="UniProtKB-EC"/>
</dbReference>
<dbReference type="GO" id="GO:0006123">
    <property type="term" value="P:mitochondrial electron transport, cytochrome c to oxygen"/>
    <property type="evidence" value="ECO:0000318"/>
    <property type="project" value="GO_Central"/>
</dbReference>
<dbReference type="GO" id="GO:0008535">
    <property type="term" value="P:respiratory chain complex IV assembly"/>
    <property type="evidence" value="ECO:0000250"/>
    <property type="project" value="UniProtKB"/>
</dbReference>
<dbReference type="CDD" id="cd01665">
    <property type="entry name" value="Cyt_c_Oxidase_III"/>
    <property type="match status" value="1"/>
</dbReference>
<dbReference type="FunFam" id="1.10.287.70:FF:000048">
    <property type="entry name" value="Cytochrome c oxidase subunit 3"/>
    <property type="match status" value="1"/>
</dbReference>
<dbReference type="FunFam" id="1.20.120.80:FF:000002">
    <property type="entry name" value="Cytochrome c oxidase subunit 3"/>
    <property type="match status" value="1"/>
</dbReference>
<dbReference type="Gene3D" id="1.10.287.70">
    <property type="match status" value="1"/>
</dbReference>
<dbReference type="Gene3D" id="1.20.120.80">
    <property type="entry name" value="Cytochrome c oxidase, subunit III, four-helix bundle"/>
    <property type="match status" value="1"/>
</dbReference>
<dbReference type="InterPro" id="IPR024791">
    <property type="entry name" value="Cyt_c/ubiquinol_Oxase_su3"/>
</dbReference>
<dbReference type="InterPro" id="IPR033945">
    <property type="entry name" value="Cyt_c_oxase_su3_dom"/>
</dbReference>
<dbReference type="InterPro" id="IPR000298">
    <property type="entry name" value="Cyt_c_oxidase-like_su3"/>
</dbReference>
<dbReference type="InterPro" id="IPR035973">
    <property type="entry name" value="Cyt_c_oxidase_su3-like_sf"/>
</dbReference>
<dbReference type="InterPro" id="IPR013833">
    <property type="entry name" value="Cyt_c_oxidase_su3_a-hlx"/>
</dbReference>
<dbReference type="PANTHER" id="PTHR11403:SF7">
    <property type="entry name" value="CYTOCHROME C OXIDASE SUBUNIT 3"/>
    <property type="match status" value="1"/>
</dbReference>
<dbReference type="PANTHER" id="PTHR11403">
    <property type="entry name" value="CYTOCHROME C OXIDASE SUBUNIT III"/>
    <property type="match status" value="1"/>
</dbReference>
<dbReference type="Pfam" id="PF00510">
    <property type="entry name" value="COX3"/>
    <property type="match status" value="1"/>
</dbReference>
<dbReference type="SUPFAM" id="SSF81452">
    <property type="entry name" value="Cytochrome c oxidase subunit III-like"/>
    <property type="match status" value="1"/>
</dbReference>
<dbReference type="PROSITE" id="PS50253">
    <property type="entry name" value="COX3"/>
    <property type="match status" value="1"/>
</dbReference>
<accession>P48892</accession>
<comment type="function">
    <text evidence="2">Component of the cytochrome c oxidase, the last enzyme in the mitochondrial electron transport chain which drives oxidative phosphorylation. The respiratory chain contains 3 multisubunit complexes succinate dehydrogenase (complex II, CII), ubiquinol-cytochrome c oxidoreductase (cytochrome b-c1 complex, complex III, CIII) and cytochrome c oxidase (complex IV, CIV), that cooperate to transfer electrons derived from NADH and succinate to molecular oxygen, creating an electrochemical gradient over the inner membrane that drives transmembrane transport and the ATP synthase. Cytochrome c oxidase is the component of the respiratory chain that catalyzes the reduction of oxygen to water. Electrons originating from reduced cytochrome c in the intermembrane space (IMS) are transferred via the dinuclear copper A center (CU(A)) of subunit 2 and heme A of subunit 1 to the active site in subunit 1, a binuclear center (BNC) formed by heme A3 and copper B (CU(B)). The BNC reduces molecular oxygen to 2 water molecules using 4 electrons from cytochrome c in the IMS and 4 protons from the mitochondrial matrix.</text>
</comment>
<comment type="catalytic activity">
    <reaction evidence="2">
        <text>4 Fe(II)-[cytochrome c] + O2 + 8 H(+)(in) = 4 Fe(III)-[cytochrome c] + 2 H2O + 4 H(+)(out)</text>
        <dbReference type="Rhea" id="RHEA:11436"/>
        <dbReference type="Rhea" id="RHEA-COMP:10350"/>
        <dbReference type="Rhea" id="RHEA-COMP:14399"/>
        <dbReference type="ChEBI" id="CHEBI:15377"/>
        <dbReference type="ChEBI" id="CHEBI:15378"/>
        <dbReference type="ChEBI" id="CHEBI:15379"/>
        <dbReference type="ChEBI" id="CHEBI:29033"/>
        <dbReference type="ChEBI" id="CHEBI:29034"/>
        <dbReference type="EC" id="7.1.1.9"/>
    </reaction>
    <physiologicalReaction direction="left-to-right" evidence="2">
        <dbReference type="Rhea" id="RHEA:11437"/>
    </physiologicalReaction>
</comment>
<comment type="subunit">
    <text evidence="1">Component of the cytochrome c oxidase (complex IV, CIV), a multisubunit enzyme composed of 14 subunits. The complex is composed of a catalytic core of 3 subunits MT-CO1, MT-CO2 and MT-CO3, encoded in the mitochondrial DNA, and 11 supernumerary subunits COX4I, COX5A, COX5B, COX6A, COX6B, COX6C, COX7A, COX7B, COX7C, COX8 and NDUFA4, which are encoded in the nuclear genome. The complex exists as a monomer or a dimer and forms supercomplexes (SCs) in the inner mitochondrial membrane with NADH-ubiquinone oxidoreductase (complex I, CI) and ubiquinol-cytochrome c oxidoreductase (cytochrome b-c1 complex, complex III, CIII), resulting in different assemblies (supercomplex SCI(1)III(2)IV(1) and megacomplex MCI(2)III(2)IV(2)).</text>
</comment>
<comment type="subcellular location">
    <subcellularLocation>
        <location evidence="1">Mitochondrion inner membrane</location>
        <topology evidence="1">Multi-pass membrane protein</topology>
    </subcellularLocation>
</comment>
<comment type="similarity">
    <text evidence="3">Belongs to the cytochrome c oxidase subunit 3 family.</text>
</comment>
<geneLocation type="mitochondrion"/>
<sequence length="261" mass="29952">MTHQTHAYHMVNPSPWPLTGALSALLMTSGLAMWFHYNLTLLLTLGMTTNLLTMYQWWRDIIRESTFQGHHTPIVQKGLRYGMILFIISEVFFFAGFFWAFYHSSLAPTPELGGCWPPTGIIPLNPLEVPLLNTSVLLASGVSITWAHHSLMEGNRKHMLQALFITISLGVYFTLLQASEYYETSFTISDGVYGSTFFMATGFHGLHVIIGSTFLIVCFLRQLKYHFTSNHHFGFEAAAWYWHFVDVVWLFLYVSIYWWGS</sequence>
<reference key="1">
    <citation type="journal article" date="1996" name="Genomics">
        <title>Complete nucleotide sequences of the domestic cat (Felis catus) mitochondrial genome and a transposed mtDNA tandem repeat (Numt) in the nuclear genome.</title>
        <authorList>
            <person name="Lopez J.V."/>
            <person name="Cevario S."/>
            <person name="O'Brien S.J."/>
        </authorList>
    </citation>
    <scope>NUCLEOTIDE SEQUENCE [LARGE SCALE GENOMIC DNA]</scope>
    <source>
        <strain evidence="4">Abyssinian</strain>
        <tissue>Blood</tissue>
    </source>
</reference>
<gene>
    <name type="primary">MT-CO3</name>
    <name type="synonym">COIII</name>
    <name type="synonym">COXIII</name>
    <name type="synonym">MTCO3</name>
</gene>
<keyword id="KW-0472">Membrane</keyword>
<keyword id="KW-0496">Mitochondrion</keyword>
<keyword id="KW-0999">Mitochondrion inner membrane</keyword>
<keyword id="KW-1185">Reference proteome</keyword>
<keyword id="KW-1278">Translocase</keyword>
<keyword id="KW-0812">Transmembrane</keyword>
<keyword id="KW-1133">Transmembrane helix</keyword>
<name>COX3_FELCA</name>
<organism>
    <name type="scientific">Felis catus</name>
    <name type="common">Cat</name>
    <name type="synonym">Felis silvestris catus</name>
    <dbReference type="NCBI Taxonomy" id="9685"/>
    <lineage>
        <taxon>Eukaryota</taxon>
        <taxon>Metazoa</taxon>
        <taxon>Chordata</taxon>
        <taxon>Craniata</taxon>
        <taxon>Vertebrata</taxon>
        <taxon>Euteleostomi</taxon>
        <taxon>Mammalia</taxon>
        <taxon>Eutheria</taxon>
        <taxon>Laurasiatheria</taxon>
        <taxon>Carnivora</taxon>
        <taxon>Feliformia</taxon>
        <taxon>Felidae</taxon>
        <taxon>Felinae</taxon>
        <taxon>Felis</taxon>
    </lineage>
</organism>
<protein>
    <recommendedName>
        <fullName>Cytochrome c oxidase subunit 3</fullName>
        <ecNumber>7.1.1.9</ecNumber>
    </recommendedName>
    <alternativeName>
        <fullName>Cytochrome c oxidase polypeptide III</fullName>
    </alternativeName>
</protein>
<proteinExistence type="inferred from homology"/>